<sequence length="304" mass="34484">MIVVLIGALSIDIIFGEPKEYIHPVVFSGRVASAIEGYFRKFDNRFRAGILFSIAVIVLTAIPYFLAVYLSSFILVVYVVVSMVILKTTFSITSMGEHIKLITDSLKKGNIMEARMHLSMIVRRDTSRLNENEISSAAIESIAEGLVDGYITPLFFFVFFGLPGAFIARIINTLDSMYGYKDRKNFEFGRFSAFMDTVINYIPARISWFFITFSSDILNYRSKAIPVRRYIRRFDSVNAGWPIASMASALNLRLEKKGHYIVNDDGYQPGVADIEKSMKIYYLAAYSYIVIFVLPLLVIMAVFL</sequence>
<accession>Q97CS1</accession>
<keyword id="KW-1003">Cell membrane</keyword>
<keyword id="KW-0169">Cobalamin biosynthesis</keyword>
<keyword id="KW-0472">Membrane</keyword>
<keyword id="KW-0812">Transmembrane</keyword>
<keyword id="KW-1133">Transmembrane helix</keyword>
<name>COBD_THEVO</name>
<dbReference type="EMBL" id="BA000011">
    <property type="protein sequence ID" value="BAB59172.1"/>
    <property type="status" value="ALT_INIT"/>
    <property type="molecule type" value="Genomic_DNA"/>
</dbReference>
<dbReference type="SMR" id="Q97CS1"/>
<dbReference type="STRING" id="273116.gene:9380795"/>
<dbReference type="PaxDb" id="273116-14324244"/>
<dbReference type="KEGG" id="tvo:TVG0029865"/>
<dbReference type="eggNOG" id="arCOG04274">
    <property type="taxonomic scope" value="Archaea"/>
</dbReference>
<dbReference type="HOGENOM" id="CLU_054212_0_2_2"/>
<dbReference type="OrthoDB" id="46105at2157"/>
<dbReference type="PhylomeDB" id="Q97CS1"/>
<dbReference type="UniPathway" id="UPA00148"/>
<dbReference type="Proteomes" id="UP000001017">
    <property type="component" value="Chromosome"/>
</dbReference>
<dbReference type="GO" id="GO:0005886">
    <property type="term" value="C:plasma membrane"/>
    <property type="evidence" value="ECO:0007669"/>
    <property type="project" value="UniProtKB-SubCell"/>
</dbReference>
<dbReference type="GO" id="GO:0015420">
    <property type="term" value="F:ABC-type vitamin B12 transporter activity"/>
    <property type="evidence" value="ECO:0007669"/>
    <property type="project" value="UniProtKB-UniRule"/>
</dbReference>
<dbReference type="GO" id="GO:0048472">
    <property type="term" value="F:threonine-phosphate decarboxylase activity"/>
    <property type="evidence" value="ECO:0007669"/>
    <property type="project" value="InterPro"/>
</dbReference>
<dbReference type="GO" id="GO:0009236">
    <property type="term" value="P:cobalamin biosynthetic process"/>
    <property type="evidence" value="ECO:0007669"/>
    <property type="project" value="UniProtKB-UniRule"/>
</dbReference>
<dbReference type="HAMAP" id="MF_00024">
    <property type="entry name" value="CobD_CbiB"/>
    <property type="match status" value="1"/>
</dbReference>
<dbReference type="InterPro" id="IPR004485">
    <property type="entry name" value="Cobalamin_biosynth_CobD/CbiB"/>
</dbReference>
<dbReference type="NCBIfam" id="TIGR00380">
    <property type="entry name" value="cobal_cbiB"/>
    <property type="match status" value="1"/>
</dbReference>
<dbReference type="NCBIfam" id="NF002281">
    <property type="entry name" value="PRK01209.2-5"/>
    <property type="match status" value="1"/>
</dbReference>
<dbReference type="PANTHER" id="PTHR34308">
    <property type="entry name" value="COBALAMIN BIOSYNTHESIS PROTEIN CBIB"/>
    <property type="match status" value="1"/>
</dbReference>
<dbReference type="PANTHER" id="PTHR34308:SF1">
    <property type="entry name" value="COBALAMIN BIOSYNTHESIS PROTEIN CBIB"/>
    <property type="match status" value="1"/>
</dbReference>
<dbReference type="Pfam" id="PF03186">
    <property type="entry name" value="CobD_Cbib"/>
    <property type="match status" value="1"/>
</dbReference>
<feature type="chain" id="PRO_0000150948" description="Probable cobalamin biosynthesis protein CobD">
    <location>
        <begin position="1"/>
        <end position="304"/>
    </location>
</feature>
<feature type="transmembrane region" description="Helical" evidence="1">
    <location>
        <begin position="2"/>
        <end position="22"/>
    </location>
</feature>
<feature type="transmembrane region" description="Helical" evidence="1">
    <location>
        <begin position="50"/>
        <end position="70"/>
    </location>
</feature>
<feature type="transmembrane region" description="Helical" evidence="1">
    <location>
        <begin position="73"/>
        <end position="93"/>
    </location>
</feature>
<feature type="transmembrane region" description="Helical" evidence="1">
    <location>
        <begin position="147"/>
        <end position="167"/>
    </location>
</feature>
<feature type="transmembrane region" description="Helical" evidence="1">
    <location>
        <begin position="284"/>
        <end position="304"/>
    </location>
</feature>
<organism>
    <name type="scientific">Thermoplasma volcanium (strain ATCC 51530 / DSM 4299 / JCM 9571 / NBRC 15438 / GSS1)</name>
    <dbReference type="NCBI Taxonomy" id="273116"/>
    <lineage>
        <taxon>Archaea</taxon>
        <taxon>Methanobacteriati</taxon>
        <taxon>Thermoplasmatota</taxon>
        <taxon>Thermoplasmata</taxon>
        <taxon>Thermoplasmatales</taxon>
        <taxon>Thermoplasmataceae</taxon>
        <taxon>Thermoplasma</taxon>
    </lineage>
</organism>
<proteinExistence type="inferred from homology"/>
<protein>
    <recommendedName>
        <fullName evidence="1">Probable cobalamin biosynthesis protein CobD</fullName>
    </recommendedName>
</protein>
<gene>
    <name evidence="1" type="primary">cobD</name>
    <name type="ordered locus">TV0030</name>
    <name type="ORF">TVG0029865</name>
</gene>
<comment type="function">
    <text evidence="1">Converts cobyric acid to cobinamide by the addition of aminopropanol on the F carboxylic group.</text>
</comment>
<comment type="pathway">
    <text evidence="1">Cofactor biosynthesis; adenosylcobalamin biosynthesis.</text>
</comment>
<comment type="subcellular location">
    <subcellularLocation>
        <location evidence="1">Cell membrane</location>
        <topology evidence="1">Multi-pass membrane protein</topology>
    </subcellularLocation>
</comment>
<comment type="similarity">
    <text evidence="1">Belongs to the CobD/CbiB family.</text>
</comment>
<comment type="sequence caution" evidence="2">
    <conflict type="erroneous initiation">
        <sequence resource="EMBL-CDS" id="BAB59172"/>
    </conflict>
</comment>
<reference key="1">
    <citation type="journal article" date="2000" name="Proc. Natl. Acad. Sci. U.S.A.">
        <title>Archaeal adaptation to higher temperatures revealed by genomic sequence of Thermoplasma volcanium.</title>
        <authorList>
            <person name="Kawashima T."/>
            <person name="Amano N."/>
            <person name="Koike H."/>
            <person name="Makino S."/>
            <person name="Higuchi S."/>
            <person name="Kawashima-Ohya Y."/>
            <person name="Watanabe K."/>
            <person name="Yamazaki M."/>
            <person name="Kanehori K."/>
            <person name="Kawamoto T."/>
            <person name="Nunoshiba T."/>
            <person name="Yamamoto Y."/>
            <person name="Aramaki H."/>
            <person name="Makino K."/>
            <person name="Suzuki M."/>
        </authorList>
    </citation>
    <scope>NUCLEOTIDE SEQUENCE [LARGE SCALE GENOMIC DNA]</scope>
    <source>
        <strain>ATCC 51530 / DSM 4299 / JCM 9571 / NBRC 15438 / GSS1</strain>
    </source>
</reference>
<evidence type="ECO:0000255" key="1">
    <source>
        <dbReference type="HAMAP-Rule" id="MF_00024"/>
    </source>
</evidence>
<evidence type="ECO:0000305" key="2"/>